<evidence type="ECO:0000255" key="1">
    <source>
        <dbReference type="HAMAP-Rule" id="MF_00142"/>
    </source>
</evidence>
<comment type="function">
    <text evidence="1">Involved in iron-sulfur (Fe-S) cluster assembly. May act as a regulator of Fe-S biogenesis.</text>
</comment>
<comment type="similarity">
    <text evidence="1">Belongs to the frataxin family.</text>
</comment>
<name>CYAY_SHESA</name>
<keyword id="KW-0408">Iron</keyword>
<keyword id="KW-0479">Metal-binding</keyword>
<accession>A0KS62</accession>
<reference key="1">
    <citation type="submission" date="2006-09" db="EMBL/GenBank/DDBJ databases">
        <title>Complete sequence of chromosome 1 of Shewanella sp. ANA-3.</title>
        <authorList>
            <person name="Copeland A."/>
            <person name="Lucas S."/>
            <person name="Lapidus A."/>
            <person name="Barry K."/>
            <person name="Detter J.C."/>
            <person name="Glavina del Rio T."/>
            <person name="Hammon N."/>
            <person name="Israni S."/>
            <person name="Dalin E."/>
            <person name="Tice H."/>
            <person name="Pitluck S."/>
            <person name="Chertkov O."/>
            <person name="Brettin T."/>
            <person name="Bruce D."/>
            <person name="Han C."/>
            <person name="Tapia R."/>
            <person name="Gilna P."/>
            <person name="Schmutz J."/>
            <person name="Larimer F."/>
            <person name="Land M."/>
            <person name="Hauser L."/>
            <person name="Kyrpides N."/>
            <person name="Kim E."/>
            <person name="Newman D."/>
            <person name="Salticov C."/>
            <person name="Konstantinidis K."/>
            <person name="Klappenback J."/>
            <person name="Tiedje J."/>
            <person name="Richardson P."/>
        </authorList>
    </citation>
    <scope>NUCLEOTIDE SEQUENCE [LARGE SCALE GENOMIC DNA]</scope>
    <source>
        <strain>ANA-3</strain>
    </source>
</reference>
<organism>
    <name type="scientific">Shewanella sp. (strain ANA-3)</name>
    <dbReference type="NCBI Taxonomy" id="94122"/>
    <lineage>
        <taxon>Bacteria</taxon>
        <taxon>Pseudomonadati</taxon>
        <taxon>Pseudomonadota</taxon>
        <taxon>Gammaproteobacteria</taxon>
        <taxon>Alteromonadales</taxon>
        <taxon>Shewanellaceae</taxon>
        <taxon>Shewanella</taxon>
    </lineage>
</organism>
<dbReference type="EMBL" id="CP000469">
    <property type="protein sequence ID" value="ABK46631.1"/>
    <property type="molecule type" value="Genomic_DNA"/>
</dbReference>
<dbReference type="RefSeq" id="WP_011621196.1">
    <property type="nucleotide sequence ID" value="NC_008577.1"/>
</dbReference>
<dbReference type="SMR" id="A0KS62"/>
<dbReference type="STRING" id="94122.Shewana3_0388"/>
<dbReference type="GeneID" id="94726384"/>
<dbReference type="KEGG" id="shn:Shewana3_0388"/>
<dbReference type="eggNOG" id="COG1965">
    <property type="taxonomic scope" value="Bacteria"/>
</dbReference>
<dbReference type="HOGENOM" id="CLU_080880_3_0_6"/>
<dbReference type="OrthoDB" id="285675at2"/>
<dbReference type="Proteomes" id="UP000002589">
    <property type="component" value="Chromosome"/>
</dbReference>
<dbReference type="GO" id="GO:0005829">
    <property type="term" value="C:cytosol"/>
    <property type="evidence" value="ECO:0007669"/>
    <property type="project" value="TreeGrafter"/>
</dbReference>
<dbReference type="GO" id="GO:0008199">
    <property type="term" value="F:ferric iron binding"/>
    <property type="evidence" value="ECO:0007669"/>
    <property type="project" value="InterPro"/>
</dbReference>
<dbReference type="GO" id="GO:0008198">
    <property type="term" value="F:ferrous iron binding"/>
    <property type="evidence" value="ECO:0007669"/>
    <property type="project" value="TreeGrafter"/>
</dbReference>
<dbReference type="GO" id="GO:0016226">
    <property type="term" value="P:iron-sulfur cluster assembly"/>
    <property type="evidence" value="ECO:0007669"/>
    <property type="project" value="UniProtKB-UniRule"/>
</dbReference>
<dbReference type="CDD" id="cd00503">
    <property type="entry name" value="Frataxin"/>
    <property type="match status" value="1"/>
</dbReference>
<dbReference type="FunFam" id="3.30.920.10:FF:000005">
    <property type="entry name" value="Iron-sulfur cluster assembly protein CyaY"/>
    <property type="match status" value="1"/>
</dbReference>
<dbReference type="Gene3D" id="3.30.920.10">
    <property type="entry name" value="Frataxin/CyaY"/>
    <property type="match status" value="1"/>
</dbReference>
<dbReference type="HAMAP" id="MF_00142">
    <property type="entry name" value="CyaY"/>
    <property type="match status" value="1"/>
</dbReference>
<dbReference type="InterPro" id="IPR047584">
    <property type="entry name" value="CyaY"/>
</dbReference>
<dbReference type="InterPro" id="IPR002908">
    <property type="entry name" value="Frataxin/CyaY"/>
</dbReference>
<dbReference type="InterPro" id="IPR036524">
    <property type="entry name" value="Frataxin/CyaY_sf"/>
</dbReference>
<dbReference type="InterPro" id="IPR020895">
    <property type="entry name" value="Frataxin_CS"/>
</dbReference>
<dbReference type="NCBIfam" id="TIGR03421">
    <property type="entry name" value="FeS_CyaY"/>
    <property type="match status" value="1"/>
</dbReference>
<dbReference type="PANTHER" id="PTHR16821">
    <property type="entry name" value="FRATAXIN"/>
    <property type="match status" value="1"/>
</dbReference>
<dbReference type="PANTHER" id="PTHR16821:SF2">
    <property type="entry name" value="FRATAXIN, MITOCHONDRIAL"/>
    <property type="match status" value="1"/>
</dbReference>
<dbReference type="Pfam" id="PF01491">
    <property type="entry name" value="Frataxin_Cyay"/>
    <property type="match status" value="1"/>
</dbReference>
<dbReference type="SMART" id="SM01219">
    <property type="entry name" value="Frataxin_Cyay"/>
    <property type="match status" value="1"/>
</dbReference>
<dbReference type="SUPFAM" id="SSF55387">
    <property type="entry name" value="Frataxin/Nqo15-like"/>
    <property type="match status" value="1"/>
</dbReference>
<dbReference type="PROSITE" id="PS01344">
    <property type="entry name" value="FRATAXIN_1"/>
    <property type="match status" value="1"/>
</dbReference>
<dbReference type="PROSITE" id="PS50810">
    <property type="entry name" value="FRATAXIN_2"/>
    <property type="match status" value="1"/>
</dbReference>
<proteinExistence type="inferred from homology"/>
<gene>
    <name evidence="1" type="primary">cyaY</name>
    <name type="ordered locus">Shewana3_0388</name>
</gene>
<sequence>MAMTDTEFHQLADDMFQAIETAIETAIDEQDADVDIDASGNVLQLEFVDGSKIVINKQEPLHEIWVATRFGGYHFGFVDGKWIDGRNGGEFMPFVQDSILRQSGIALSF</sequence>
<protein>
    <recommendedName>
        <fullName evidence="1">Iron-sulfur cluster assembly protein CyaY</fullName>
    </recommendedName>
</protein>
<feature type="chain" id="PRO_1000010956" description="Iron-sulfur cluster assembly protein CyaY">
    <location>
        <begin position="1"/>
        <end position="109"/>
    </location>
</feature>